<sequence>MSTSDDIHNTTATGKCPFHQGGHDQSAGAGTTTRDWWPNQLRVDLLNQHSNRSNPLGEDFDYRKEFSKLDYYGLKKDLKALLTESQPWWPADWGSYAGLFIRMAWHGAGTYRSIDGRGGAGRGQQRFAPLNSWPDNVSLDKARRLLWPIKQKYGQKISWADLFILAGNVALENSGFRTFGFGAGREDVWEPDLDVNWGDEKAWLTHRHPEALAKAPLGATEMGLIYVNPEGPDHSGEPLSAAAAIRATFGNMGMNDEETVALIAGGHTLGKTHGAGPTSNVGPDPEAAPIEEQGLGWASTYGSGVGADAITSGLEVVWTQTPTQWSNYFFENLFKYEWVQTRSPAGAIQFEAVDAPEIIPDPFDPSKKRKPTMLVTDLTLRFDPEFEKISRRFLNDPQAFNEAFARAWFKLTHRDMGPKSRYIGPEVPKEDLIWQDPLPQPIYNPTEQDIIDLKFAIADSGLSVSELVSVAWASASTFRGGDKRGGANGARLALMPQRDWDVNAAAVRALPVLEKIQKESGKASLADIIVLAGVVGVEKAASAAGLSIHVPFAPGRVDARQDQTDIEMFELLEPIADGFRNYRARLDVSTTESLLIDKAQQLTLTAPEMTALVGGMRVLGANFDGSKNGVFTDRVGVLSNDFFVNLLDMRYEWKATDESKELFEGRDRETGEVKFTASRADLVFGSNSVLRAVAEVYASSDAHEKFVKDFVAAWVKVMNLDRFDLL</sequence>
<feature type="chain" id="PRO_0000055564" description="Catalase-peroxidase">
    <location>
        <begin position="1"/>
        <end position="726"/>
    </location>
</feature>
<feature type="region of interest" description="Disordered" evidence="2">
    <location>
        <begin position="1"/>
        <end position="33"/>
    </location>
</feature>
<feature type="active site" description="Proton acceptor" evidence="1">
    <location>
        <position position="106"/>
    </location>
</feature>
<feature type="binding site" description="axial binding residue">
    <location>
        <position position="267"/>
    </location>
    <ligand>
        <name>heme b</name>
        <dbReference type="ChEBI" id="CHEBI:60344"/>
    </ligand>
    <ligandPart>
        <name>Fe</name>
        <dbReference type="ChEBI" id="CHEBI:18248"/>
    </ligandPart>
</feature>
<feature type="site" description="Transition state stabilizer" evidence="1">
    <location>
        <position position="102"/>
    </location>
</feature>
<feature type="cross-link" description="Tryptophyl-tyrosyl-methioninium (Trp-Tyr) (with M-252)" evidence="3">
    <location>
        <begin position="105"/>
        <end position="226"/>
    </location>
</feature>
<feature type="cross-link" description="Tryptophyl-tyrosyl-methioninium (Tyr-Met) (with W-105)" evidence="9">
    <location>
        <begin position="226"/>
        <end position="252"/>
    </location>
</feature>
<feature type="sequence conflict" description="In Ref. 1; AAA24040." evidence="8" ref="1">
    <original>A</original>
    <variation>G</variation>
    <location>
        <position position="621"/>
    </location>
</feature>
<feature type="helix" evidence="12">
    <location>
        <begin position="429"/>
        <end position="431"/>
    </location>
</feature>
<feature type="helix" evidence="11">
    <location>
        <begin position="447"/>
        <end position="458"/>
    </location>
</feature>
<feature type="turn" evidence="12">
    <location>
        <begin position="459"/>
        <end position="461"/>
    </location>
</feature>
<feature type="helix" evidence="11">
    <location>
        <begin position="464"/>
        <end position="475"/>
    </location>
</feature>
<feature type="turn" evidence="10">
    <location>
        <begin position="480"/>
        <end position="483"/>
    </location>
</feature>
<feature type="helix" evidence="11">
    <location>
        <begin position="491"/>
        <end position="493"/>
    </location>
</feature>
<feature type="helix" evidence="11">
    <location>
        <begin position="497"/>
        <end position="499"/>
    </location>
</feature>
<feature type="helix" evidence="11">
    <location>
        <begin position="501"/>
        <end position="503"/>
    </location>
</feature>
<feature type="helix" evidence="11">
    <location>
        <begin position="506"/>
        <end position="520"/>
    </location>
</feature>
<feature type="helix" evidence="11">
    <location>
        <begin position="525"/>
        <end position="543"/>
    </location>
</feature>
<feature type="helix" evidence="11">
    <location>
        <begin position="561"/>
        <end position="563"/>
    </location>
</feature>
<feature type="helix" evidence="11">
    <location>
        <begin position="566"/>
        <end position="570"/>
    </location>
</feature>
<feature type="strand" evidence="11">
    <location>
        <begin position="575"/>
        <end position="577"/>
    </location>
</feature>
<feature type="turn" evidence="11">
    <location>
        <begin position="578"/>
        <end position="581"/>
    </location>
</feature>
<feature type="helix" evidence="11">
    <location>
        <begin position="591"/>
        <end position="601"/>
    </location>
</feature>
<feature type="helix" evidence="11">
    <location>
        <begin position="606"/>
        <end position="619"/>
    </location>
</feature>
<feature type="strand" evidence="10">
    <location>
        <begin position="623"/>
        <end position="625"/>
    </location>
</feature>
<feature type="helix" evidence="11">
    <location>
        <begin position="641"/>
        <end position="647"/>
    </location>
</feature>
<feature type="strand" evidence="11">
    <location>
        <begin position="651"/>
        <end position="657"/>
    </location>
</feature>
<feature type="strand" evidence="11">
    <location>
        <begin position="662"/>
        <end position="667"/>
    </location>
</feature>
<feature type="turn" evidence="11">
    <location>
        <begin position="668"/>
        <end position="670"/>
    </location>
</feature>
<feature type="strand" evidence="11">
    <location>
        <begin position="673"/>
        <end position="678"/>
    </location>
</feature>
<feature type="helix" evidence="11">
    <location>
        <begin position="679"/>
        <end position="686"/>
    </location>
</feature>
<feature type="helix" evidence="11">
    <location>
        <begin position="688"/>
        <end position="697"/>
    </location>
</feature>
<feature type="strand" evidence="11">
    <location>
        <begin position="699"/>
        <end position="701"/>
    </location>
</feature>
<feature type="helix" evidence="11">
    <location>
        <begin position="703"/>
        <end position="718"/>
    </location>
</feature>
<feature type="turn" evidence="11">
    <location>
        <begin position="719"/>
        <end position="721"/>
    </location>
</feature>
<evidence type="ECO:0000255" key="1">
    <source>
        <dbReference type="HAMAP-Rule" id="MF_01961"/>
    </source>
</evidence>
<evidence type="ECO:0000256" key="2">
    <source>
        <dbReference type="SAM" id="MobiDB-lite"/>
    </source>
</evidence>
<evidence type="ECO:0000269" key="3">
    <source>
    </source>
</evidence>
<evidence type="ECO:0000269" key="4">
    <source>
    </source>
</evidence>
<evidence type="ECO:0000269" key="5">
    <source>
    </source>
</evidence>
<evidence type="ECO:0000269" key="6">
    <source>
    </source>
</evidence>
<evidence type="ECO:0000303" key="7">
    <source>
    </source>
</evidence>
<evidence type="ECO:0000305" key="8"/>
<evidence type="ECO:0000305" key="9">
    <source>
    </source>
</evidence>
<evidence type="ECO:0007829" key="10">
    <source>
        <dbReference type="PDB" id="1U2J"/>
    </source>
</evidence>
<evidence type="ECO:0007829" key="11">
    <source>
        <dbReference type="PDB" id="1U2K"/>
    </source>
</evidence>
<evidence type="ECO:0007829" key="12">
    <source>
        <dbReference type="PDB" id="1U2L"/>
    </source>
</evidence>
<gene>
    <name evidence="1" type="primary">katG</name>
    <name type="ordered locus">b3942</name>
    <name type="ordered locus">JW3914</name>
</gene>
<reference key="1">
    <citation type="journal article" date="1988" name="J. Bacteriol.">
        <title>Nucleotide sequence of katG, encoding catalase HPI of Escherichia coli.</title>
        <authorList>
            <person name="Triggs-Raine B.L."/>
            <person name="Doble B.W."/>
            <person name="Mulvey M.R."/>
            <person name="Sorby P.A."/>
            <person name="Loewen P.C."/>
        </authorList>
    </citation>
    <scope>NUCLEOTIDE SEQUENCE [GENOMIC DNA]</scope>
    <scope>PARTIAL PROTEIN SEQUENCE</scope>
</reference>
<reference key="2">
    <citation type="journal article" date="1997" name="Science">
        <title>The complete genome sequence of Escherichia coli K-12.</title>
        <authorList>
            <person name="Blattner F.R."/>
            <person name="Plunkett G. III"/>
            <person name="Bloch C.A."/>
            <person name="Perna N.T."/>
            <person name="Burland V."/>
            <person name="Riley M."/>
            <person name="Collado-Vides J."/>
            <person name="Glasner J.D."/>
            <person name="Rode C.K."/>
            <person name="Mayhew G.F."/>
            <person name="Gregor J."/>
            <person name="Davis N.W."/>
            <person name="Kirkpatrick H.A."/>
            <person name="Goeden M.A."/>
            <person name="Rose D.J."/>
            <person name="Mau B."/>
            <person name="Shao Y."/>
        </authorList>
    </citation>
    <scope>NUCLEOTIDE SEQUENCE [LARGE SCALE GENOMIC DNA]</scope>
    <source>
        <strain>K12 / MG1655 / ATCC 47076</strain>
    </source>
</reference>
<reference key="3">
    <citation type="journal article" date="2006" name="Mol. Syst. Biol.">
        <title>Highly accurate genome sequences of Escherichia coli K-12 strains MG1655 and W3110.</title>
        <authorList>
            <person name="Hayashi K."/>
            <person name="Morooka N."/>
            <person name="Yamamoto Y."/>
            <person name="Fujita K."/>
            <person name="Isono K."/>
            <person name="Choi S."/>
            <person name="Ohtsubo E."/>
            <person name="Baba T."/>
            <person name="Wanner B.L."/>
            <person name="Mori H."/>
            <person name="Horiuchi T."/>
        </authorList>
    </citation>
    <scope>NUCLEOTIDE SEQUENCE [LARGE SCALE GENOMIC DNA]</scope>
    <source>
        <strain>K12 / W3110 / ATCC 27325 / DSM 5911</strain>
    </source>
</reference>
<reference key="4">
    <citation type="journal article" date="1993" name="Nucleic Acids Res.">
        <title>Analysis of the Escherichia coli genome. III. DNA sequence of the region from 87.2 to 89.2 minutes.</title>
        <authorList>
            <person name="Plunkett G. III"/>
            <person name="Burland V."/>
            <person name="Daniels D.L."/>
            <person name="Blattner F.R."/>
        </authorList>
    </citation>
    <scope>NUCLEOTIDE SEQUENCE [LARGE SCALE GENOMIC DNA] OF 1-339</scope>
    <source>
        <strain>K12 / MG1655 / ATCC 47076</strain>
    </source>
</reference>
<reference key="5">
    <citation type="journal article" date="1993" name="Nucleic Acids Res.">
        <title>Analysis of the Escherichia coli genome. IV. DNA sequence of the region from 89.2 to 92.8 minutes.</title>
        <authorList>
            <person name="Blattner F.R."/>
            <person name="Burland V.D."/>
            <person name="Plunkett G. III"/>
            <person name="Sofia H.J."/>
            <person name="Daniels D.L."/>
        </authorList>
    </citation>
    <scope>NUCLEOTIDE SEQUENCE [LARGE SCALE GENOMIC DNA] OF 309-726</scope>
    <source>
        <strain>K12 / MG1655 / ATCC 47076</strain>
    </source>
</reference>
<reference key="6">
    <citation type="journal article" date="1979" name="J. Biol. Chem.">
        <title>Purification of the o-dianisidine peroxidase from Escherichia coli B.</title>
        <authorList>
            <person name="Claiborne A."/>
            <person name="Fridovich I."/>
        </authorList>
    </citation>
    <scope>FUNCTION</scope>
    <scope>BIOPHYSICOCHEMICAL PROPERTIES</scope>
    <scope>SUBUNIT</scope>
    <scope>HEME-BINDING</scope>
    <scope>COFACTOR</scope>
</reference>
<reference key="7">
    <citation type="journal article" date="2003" name="J. Biol. Chem.">
        <title>Characterization of the catalase-peroxidase KatG from Burkholderia pseudomallei by mass spectrometry.</title>
        <authorList>
            <person name="Donald L.J."/>
            <person name="Krokhin O.V."/>
            <person name="Duckworth H.W."/>
            <person name="Wiseman B."/>
            <person name="Deemagarn T."/>
            <person name="Singh R."/>
            <person name="Switala J."/>
            <person name="Carpena X."/>
            <person name="Fita I."/>
            <person name="Loewen P.C."/>
        </authorList>
    </citation>
    <scope>COVALENT BOND</scope>
</reference>
<reference key="8">
    <citation type="journal article" date="2008" name="Arch. Biochem. Biophys.">
        <title>Comparative study of catalase-peroxidases (KatGs).</title>
        <authorList>
            <person name="Singh R."/>
            <person name="Wiseman B."/>
            <person name="Deemagarn T."/>
            <person name="Jha V."/>
            <person name="Switala J."/>
            <person name="Loewen P.C."/>
        </authorList>
    </citation>
    <scope>FUNCTION</scope>
    <scope>BIOPHYSICOCHEMICAL PROPERTIES</scope>
</reference>
<reference key="9">
    <citation type="journal article" date="2013" name="Cell Rep.">
        <title>YihE kinase is a central regulator of programmed cell death in bacteria.</title>
        <authorList>
            <person name="Dorsey-Oresto A."/>
            <person name="Lu T."/>
            <person name="Mosel M."/>
            <person name="Wang X."/>
            <person name="Salz T."/>
            <person name="Drlica K."/>
            <person name="Zhao X."/>
        </authorList>
    </citation>
    <scope>FUNCTION</scope>
    <scope>DISRUPTION PHENOTYPE</scope>
    <source>
        <strain>K12 / MG1655 / ATCC 47076</strain>
    </source>
</reference>
<reference key="10">
    <citation type="journal article" date="2004" name="Acta Crystallogr. D">
        <title>Structure of the C-terminal domain of the catalase-peroxidase KatG from Escherichia coli.</title>
        <authorList>
            <person name="Carpena X."/>
            <person name="Melik-Adamyan W."/>
            <person name="Loewen P.C."/>
            <person name="Fita I."/>
        </authorList>
    </citation>
    <scope>X-RAY CRYSTALLOGRAPHY (2.0 ANGSTROMS) OF 422-726</scope>
</reference>
<keyword id="KW-0002">3D-structure</keyword>
<keyword id="KW-0903">Direct protein sequencing</keyword>
<keyword id="KW-0349">Heme</keyword>
<keyword id="KW-0376">Hydrogen peroxide</keyword>
<keyword id="KW-0408">Iron</keyword>
<keyword id="KW-0479">Metal-binding</keyword>
<keyword id="KW-0560">Oxidoreductase</keyword>
<keyword id="KW-0575">Peroxidase</keyword>
<keyword id="KW-1185">Reference proteome</keyword>
<name>KATG_ECOLI</name>
<protein>
    <recommendedName>
        <fullName evidence="1">Catalase-peroxidase</fullName>
        <shortName evidence="1">CP</shortName>
        <ecNumber evidence="1">1.11.1.21</ecNumber>
    </recommendedName>
    <alternativeName>
        <fullName evidence="7">Hydroperoxidase I</fullName>
        <shortName evidence="7">HPI</shortName>
    </alternativeName>
    <alternativeName>
        <fullName evidence="1">Peroxidase/catalase</fullName>
    </alternativeName>
</protein>
<comment type="function">
    <text evidence="4 5 6">Bifunctional enzyme with both catalase and broad-spectrum peroxidase activity. Also displays NADH oxidase, INH lyase and isonicotinoyl-NAD synthase activities.</text>
</comment>
<comment type="catalytic activity">
    <reaction evidence="1">
        <text>H2O2 + AH2 = A + 2 H2O</text>
        <dbReference type="Rhea" id="RHEA:30275"/>
        <dbReference type="ChEBI" id="CHEBI:13193"/>
        <dbReference type="ChEBI" id="CHEBI:15377"/>
        <dbReference type="ChEBI" id="CHEBI:16240"/>
        <dbReference type="ChEBI" id="CHEBI:17499"/>
        <dbReference type="EC" id="1.11.1.21"/>
    </reaction>
</comment>
<comment type="catalytic activity">
    <reaction evidence="1">
        <text>2 H2O2 = O2 + 2 H2O</text>
        <dbReference type="Rhea" id="RHEA:20309"/>
        <dbReference type="ChEBI" id="CHEBI:15377"/>
        <dbReference type="ChEBI" id="CHEBI:15379"/>
        <dbReference type="ChEBI" id="CHEBI:16240"/>
        <dbReference type="EC" id="1.11.1.21"/>
    </reaction>
</comment>
<comment type="cofactor">
    <cofactor evidence="6">
        <name>heme b</name>
        <dbReference type="ChEBI" id="CHEBI:60344"/>
    </cofactor>
    <text evidence="6">Binds 2 heme B (iron-protoporphyrin IX) groups per tetramer.</text>
</comment>
<comment type="biophysicochemical properties">
    <kinetics>
        <KM evidence="4 6">35 mM for H(2)O(2) for the catalase reaction (at pH 5.5-6.0)</KM>
        <KM evidence="4 6">4.2 mM for H(2)O(2) for the catalase reaction (at pH 7.0)</KM>
        <KM evidence="4 6">3.9 mM for H(2)O(2) for the catalase reaction (at pH 7.5)</KM>
        <KM evidence="4 6">60 uM for H(2)O(2) for the peroxidase reaction</KM>
        <KM evidence="4 6">24 uM for ABTS for the peroxidase reaction</KM>
        <Vmax evidence="4 6">3730.0 umol/min/mg enzyme for H(2)O(2) for the catalase reaction (at pH 5.5-6.0)</Vmax>
        <Vmax evidence="4 6">2220.0 umol/min/mg enzyme for H(2)O(2) for the catalase reaction (at pH 7.0)</Vmax>
        <Vmax evidence="4 6">18.0 umol/min/mg enzyme for ABTS for the peroxidase reaction</Vmax>
    </kinetics>
    <phDependence>
        <text evidence="4 6">Optimum pH is 4.25 for the peroxidase reaction and 7.5 for the catalase reaction.</text>
    </phDependence>
</comment>
<comment type="subunit">
    <text evidence="6">Homotetramer.</text>
</comment>
<comment type="induction">
    <text>By hydrogen peroxide.</text>
</comment>
<comment type="PTM">
    <text>The N-terminus is blocked.</text>
</comment>
<comment type="PTM">
    <text evidence="1">Formation of the three residue Trp-Tyr-Met cross-link is important for the catalase, but not the peroxidase activity of the enzyme.</text>
</comment>
<comment type="disruption phenotype">
    <text evidence="5">Cells are more sensitive to killing by nalidixic acid, the effect is mitigated by pretreatment with 2,2'-bipyridyl and thiourea, both of which inhibit hydroxyl radical accumulation.</text>
</comment>
<comment type="similarity">
    <text evidence="1">Belongs to the peroxidase family. Peroxidase/catalase subfamily.</text>
</comment>
<proteinExistence type="evidence at protein level"/>
<accession>P13029</accession>
<accession>Q2M8N8</accession>
<dbReference type="EC" id="1.11.1.21" evidence="1"/>
<dbReference type="EMBL" id="M21516">
    <property type="protein sequence ID" value="AAA24040.1"/>
    <property type="molecule type" value="Genomic_DNA"/>
</dbReference>
<dbReference type="EMBL" id="U00096">
    <property type="protein sequence ID" value="AAC76924.1"/>
    <property type="molecule type" value="Genomic_DNA"/>
</dbReference>
<dbReference type="EMBL" id="AP009048">
    <property type="protein sequence ID" value="BAE77368.1"/>
    <property type="molecule type" value="Genomic_DNA"/>
</dbReference>
<dbReference type="EMBL" id="L19201">
    <property type="protein sequence ID" value="AAB03074.1"/>
    <property type="molecule type" value="Genomic_DNA"/>
</dbReference>
<dbReference type="EMBL" id="U00006">
    <property type="protein sequence ID" value="AAC43048.1"/>
    <property type="molecule type" value="Genomic_DNA"/>
</dbReference>
<dbReference type="PIR" id="A65201">
    <property type="entry name" value="CSECHP"/>
</dbReference>
<dbReference type="RefSeq" id="NP_418377.1">
    <property type="nucleotide sequence ID" value="NC_000913.3"/>
</dbReference>
<dbReference type="RefSeq" id="WP_001295695.1">
    <property type="nucleotide sequence ID" value="NZ_SSZK01000014.1"/>
</dbReference>
<dbReference type="PDB" id="1U2J">
    <property type="method" value="X-ray"/>
    <property type="resolution" value="2.30 A"/>
    <property type="chains" value="A/B/C/D/E/F/G/H=422-726"/>
</dbReference>
<dbReference type="PDB" id="1U2K">
    <property type="method" value="X-ray"/>
    <property type="resolution" value="2.00 A"/>
    <property type="chains" value="A=422-726"/>
</dbReference>
<dbReference type="PDB" id="1U2L">
    <property type="method" value="X-ray"/>
    <property type="resolution" value="2.30 A"/>
    <property type="chains" value="A/B=422-726"/>
</dbReference>
<dbReference type="PDBsum" id="1U2J"/>
<dbReference type="PDBsum" id="1U2K"/>
<dbReference type="PDBsum" id="1U2L"/>
<dbReference type="SMR" id="P13029"/>
<dbReference type="BioGRID" id="4263062">
    <property type="interactions" value="23"/>
</dbReference>
<dbReference type="DIP" id="DIP-10053N"/>
<dbReference type="FunCoup" id="P13029">
    <property type="interactions" value="375"/>
</dbReference>
<dbReference type="IntAct" id="P13029">
    <property type="interactions" value="12"/>
</dbReference>
<dbReference type="MINT" id="P13029"/>
<dbReference type="STRING" id="511145.b3942"/>
<dbReference type="PeroxiBase" id="2394">
    <property type="entry name" value="EcoCP01_K-12"/>
</dbReference>
<dbReference type="jPOST" id="P13029"/>
<dbReference type="PaxDb" id="511145-b3942"/>
<dbReference type="EnsemblBacteria" id="AAC76924">
    <property type="protein sequence ID" value="AAC76924"/>
    <property type="gene ID" value="b3942"/>
</dbReference>
<dbReference type="GeneID" id="948431"/>
<dbReference type="KEGG" id="ecj:JW3914"/>
<dbReference type="KEGG" id="eco:b3942"/>
<dbReference type="KEGG" id="ecoc:C3026_21305"/>
<dbReference type="PATRIC" id="fig|511145.12.peg.4063"/>
<dbReference type="EchoBASE" id="EB0506"/>
<dbReference type="eggNOG" id="COG0376">
    <property type="taxonomic scope" value="Bacteria"/>
</dbReference>
<dbReference type="HOGENOM" id="CLU_025424_2_0_6"/>
<dbReference type="InParanoid" id="P13029"/>
<dbReference type="OMA" id="GPETTWL"/>
<dbReference type="OrthoDB" id="9759743at2"/>
<dbReference type="PhylomeDB" id="P13029"/>
<dbReference type="BioCyc" id="EcoCyc:HYDROPEROXIDI-MONOMER"/>
<dbReference type="BioCyc" id="MetaCyc:HYDROPEROXIDI-MONOMER"/>
<dbReference type="SABIO-RK" id="P13029"/>
<dbReference type="EvolutionaryTrace" id="P13029"/>
<dbReference type="PRO" id="PR:P13029"/>
<dbReference type="Proteomes" id="UP000000625">
    <property type="component" value="Chromosome"/>
</dbReference>
<dbReference type="GO" id="GO:0005829">
    <property type="term" value="C:cytosol"/>
    <property type="evidence" value="ECO:0000314"/>
    <property type="project" value="EcoCyc"/>
</dbReference>
<dbReference type="GO" id="GO:0004096">
    <property type="term" value="F:catalase activity"/>
    <property type="evidence" value="ECO:0000314"/>
    <property type="project" value="EcoCyc"/>
</dbReference>
<dbReference type="GO" id="GO:0020037">
    <property type="term" value="F:heme binding"/>
    <property type="evidence" value="ECO:0000314"/>
    <property type="project" value="EcoCyc"/>
</dbReference>
<dbReference type="GO" id="GO:0042802">
    <property type="term" value="F:identical protein binding"/>
    <property type="evidence" value="ECO:0000314"/>
    <property type="project" value="EcoCyc"/>
</dbReference>
<dbReference type="GO" id="GO:0046872">
    <property type="term" value="F:metal ion binding"/>
    <property type="evidence" value="ECO:0007669"/>
    <property type="project" value="UniProtKB-KW"/>
</dbReference>
<dbReference type="GO" id="GO:0016491">
    <property type="term" value="F:oxidoreductase activity"/>
    <property type="evidence" value="ECO:0000314"/>
    <property type="project" value="EcoliWiki"/>
</dbReference>
<dbReference type="GO" id="GO:0004601">
    <property type="term" value="F:peroxidase activity"/>
    <property type="evidence" value="ECO:0000314"/>
    <property type="project" value="EcoCyc"/>
</dbReference>
<dbReference type="GO" id="GO:0070301">
    <property type="term" value="P:cellular response to hydrogen peroxide"/>
    <property type="evidence" value="ECO:0000270"/>
    <property type="project" value="EcoCyc"/>
</dbReference>
<dbReference type="GO" id="GO:0042744">
    <property type="term" value="P:hydrogen peroxide catabolic process"/>
    <property type="evidence" value="ECO:0000315"/>
    <property type="project" value="EcoCyc"/>
</dbReference>
<dbReference type="GO" id="GO:0006979">
    <property type="term" value="P:response to oxidative stress"/>
    <property type="evidence" value="ECO:0000270"/>
    <property type="project" value="EcoCyc"/>
</dbReference>
<dbReference type="CDD" id="cd08200">
    <property type="entry name" value="catalase_peroxidase_2"/>
    <property type="match status" value="1"/>
</dbReference>
<dbReference type="FunFam" id="1.10.420.10:FF:000002">
    <property type="entry name" value="Catalase-peroxidase"/>
    <property type="match status" value="1"/>
</dbReference>
<dbReference type="FunFam" id="1.10.420.10:FF:000004">
    <property type="entry name" value="Catalase-peroxidase"/>
    <property type="match status" value="1"/>
</dbReference>
<dbReference type="FunFam" id="1.10.520.10:FF:000002">
    <property type="entry name" value="Catalase-peroxidase"/>
    <property type="match status" value="1"/>
</dbReference>
<dbReference type="Gene3D" id="1.10.520.10">
    <property type="match status" value="2"/>
</dbReference>
<dbReference type="Gene3D" id="1.10.420.10">
    <property type="entry name" value="Peroxidase, domain 2"/>
    <property type="match status" value="2"/>
</dbReference>
<dbReference type="HAMAP" id="MF_01961">
    <property type="entry name" value="Catal_peroxid"/>
    <property type="match status" value="1"/>
</dbReference>
<dbReference type="InterPro" id="IPR000763">
    <property type="entry name" value="Catalase_peroxidase"/>
</dbReference>
<dbReference type="InterPro" id="IPR002016">
    <property type="entry name" value="Haem_peroxidase"/>
</dbReference>
<dbReference type="InterPro" id="IPR010255">
    <property type="entry name" value="Haem_peroxidase_sf"/>
</dbReference>
<dbReference type="InterPro" id="IPR019794">
    <property type="entry name" value="Peroxidases_AS"/>
</dbReference>
<dbReference type="InterPro" id="IPR019793">
    <property type="entry name" value="Peroxidases_heam-ligand_BS"/>
</dbReference>
<dbReference type="NCBIfam" id="TIGR00198">
    <property type="entry name" value="cat_per_HPI"/>
    <property type="match status" value="1"/>
</dbReference>
<dbReference type="NCBIfam" id="NF011635">
    <property type="entry name" value="PRK15061.1"/>
    <property type="match status" value="1"/>
</dbReference>
<dbReference type="PANTHER" id="PTHR30555:SF0">
    <property type="entry name" value="CATALASE-PEROXIDASE"/>
    <property type="match status" value="1"/>
</dbReference>
<dbReference type="PANTHER" id="PTHR30555">
    <property type="entry name" value="HYDROPEROXIDASE I, BIFUNCTIONAL CATALASE-PEROXIDASE"/>
    <property type="match status" value="1"/>
</dbReference>
<dbReference type="Pfam" id="PF00141">
    <property type="entry name" value="peroxidase"/>
    <property type="match status" value="2"/>
</dbReference>
<dbReference type="PRINTS" id="PR00460">
    <property type="entry name" value="BPEROXIDASE"/>
</dbReference>
<dbReference type="PRINTS" id="PR00458">
    <property type="entry name" value="PEROXIDASE"/>
</dbReference>
<dbReference type="SUPFAM" id="SSF48113">
    <property type="entry name" value="Heme-dependent peroxidases"/>
    <property type="match status" value="2"/>
</dbReference>
<dbReference type="PROSITE" id="PS00435">
    <property type="entry name" value="PEROXIDASE_1"/>
    <property type="match status" value="1"/>
</dbReference>
<dbReference type="PROSITE" id="PS00436">
    <property type="entry name" value="PEROXIDASE_2"/>
    <property type="match status" value="1"/>
</dbReference>
<dbReference type="PROSITE" id="PS50873">
    <property type="entry name" value="PEROXIDASE_4"/>
    <property type="match status" value="1"/>
</dbReference>
<organism>
    <name type="scientific">Escherichia coli (strain K12)</name>
    <dbReference type="NCBI Taxonomy" id="83333"/>
    <lineage>
        <taxon>Bacteria</taxon>
        <taxon>Pseudomonadati</taxon>
        <taxon>Pseudomonadota</taxon>
        <taxon>Gammaproteobacteria</taxon>
        <taxon>Enterobacterales</taxon>
        <taxon>Enterobacteriaceae</taxon>
        <taxon>Escherichia</taxon>
    </lineage>
</organism>